<evidence type="ECO:0000255" key="1">
    <source>
        <dbReference type="HAMAP-Rule" id="MF_00530"/>
    </source>
</evidence>
<feature type="chain" id="PRO_1000127819" description="ATP synthase epsilon chain">
    <location>
        <begin position="1"/>
        <end position="139"/>
    </location>
</feature>
<keyword id="KW-0066">ATP synthesis</keyword>
<keyword id="KW-0997">Cell inner membrane</keyword>
<keyword id="KW-1003">Cell membrane</keyword>
<keyword id="KW-0139">CF(1)</keyword>
<keyword id="KW-0375">Hydrogen ion transport</keyword>
<keyword id="KW-0406">Ion transport</keyword>
<keyword id="KW-0472">Membrane</keyword>
<keyword id="KW-0813">Transport</keyword>
<organism>
    <name type="scientific">Actinobacillus pleuropneumoniae serotype 7 (strain AP76)</name>
    <dbReference type="NCBI Taxonomy" id="537457"/>
    <lineage>
        <taxon>Bacteria</taxon>
        <taxon>Pseudomonadati</taxon>
        <taxon>Pseudomonadota</taxon>
        <taxon>Gammaproteobacteria</taxon>
        <taxon>Pasteurellales</taxon>
        <taxon>Pasteurellaceae</taxon>
        <taxon>Actinobacillus</taxon>
    </lineage>
</organism>
<protein>
    <recommendedName>
        <fullName evidence="1">ATP synthase epsilon chain</fullName>
    </recommendedName>
    <alternativeName>
        <fullName evidence="1">ATP synthase F1 sector epsilon subunit</fullName>
    </alternativeName>
    <alternativeName>
        <fullName evidence="1">F-ATPase epsilon subunit</fullName>
    </alternativeName>
</protein>
<sequence length="139" mass="15240">MASQFELSVVSAEKEIFNGNVVSVRVTGIDGELGVYAGHTPLLTSIKPGMVKYTLEDGKEEFIYVSGGFLEVQPTIVTVLADVAIRGEELDQQRILAAKRKAEDTLSKSNNAELSAKLSREIAKLRVYEIVNSKLANRR</sequence>
<accession>B3H2P2</accession>
<proteinExistence type="inferred from homology"/>
<reference key="1">
    <citation type="submission" date="2008-06" db="EMBL/GenBank/DDBJ databases">
        <title>Genome and proteome analysis of A. pleuropneumoniae serotype 7.</title>
        <authorList>
            <person name="Linke B."/>
            <person name="Buettner F."/>
            <person name="Martinez-Arias R."/>
            <person name="Goesmann A."/>
            <person name="Baltes N."/>
            <person name="Tegetmeyer H."/>
            <person name="Singh M."/>
            <person name="Gerlach G.F."/>
        </authorList>
    </citation>
    <scope>NUCLEOTIDE SEQUENCE [LARGE SCALE GENOMIC DNA]</scope>
    <source>
        <strain>AP76</strain>
    </source>
</reference>
<dbReference type="EMBL" id="CP001091">
    <property type="protein sequence ID" value="ACE62359.1"/>
    <property type="molecule type" value="Genomic_DNA"/>
</dbReference>
<dbReference type="RefSeq" id="WP_005602397.1">
    <property type="nucleotide sequence ID" value="NC_010939.1"/>
</dbReference>
<dbReference type="SMR" id="B3H2P2"/>
<dbReference type="KEGG" id="apa:APP7_1707"/>
<dbReference type="HOGENOM" id="CLU_084338_2_0_6"/>
<dbReference type="Proteomes" id="UP000001226">
    <property type="component" value="Chromosome"/>
</dbReference>
<dbReference type="GO" id="GO:0005886">
    <property type="term" value="C:plasma membrane"/>
    <property type="evidence" value="ECO:0007669"/>
    <property type="project" value="UniProtKB-SubCell"/>
</dbReference>
<dbReference type="GO" id="GO:0045259">
    <property type="term" value="C:proton-transporting ATP synthase complex"/>
    <property type="evidence" value="ECO:0007669"/>
    <property type="project" value="UniProtKB-KW"/>
</dbReference>
<dbReference type="GO" id="GO:0005524">
    <property type="term" value="F:ATP binding"/>
    <property type="evidence" value="ECO:0007669"/>
    <property type="project" value="UniProtKB-UniRule"/>
</dbReference>
<dbReference type="GO" id="GO:0046933">
    <property type="term" value="F:proton-transporting ATP synthase activity, rotational mechanism"/>
    <property type="evidence" value="ECO:0007669"/>
    <property type="project" value="UniProtKB-UniRule"/>
</dbReference>
<dbReference type="CDD" id="cd12152">
    <property type="entry name" value="F1-ATPase_delta"/>
    <property type="match status" value="1"/>
</dbReference>
<dbReference type="FunFam" id="2.60.15.10:FF:000001">
    <property type="entry name" value="ATP synthase epsilon chain"/>
    <property type="match status" value="1"/>
</dbReference>
<dbReference type="Gene3D" id="2.60.15.10">
    <property type="entry name" value="F0F1 ATP synthase delta/epsilon subunit, N-terminal"/>
    <property type="match status" value="1"/>
</dbReference>
<dbReference type="HAMAP" id="MF_00530">
    <property type="entry name" value="ATP_synth_epsil_bac"/>
    <property type="match status" value="1"/>
</dbReference>
<dbReference type="InterPro" id="IPR036794">
    <property type="entry name" value="ATP_F1_dsu/esu_C_sf"/>
</dbReference>
<dbReference type="InterPro" id="IPR001469">
    <property type="entry name" value="ATP_synth_F1_dsu/esu"/>
</dbReference>
<dbReference type="InterPro" id="IPR020546">
    <property type="entry name" value="ATP_synth_F1_dsu/esu_N"/>
</dbReference>
<dbReference type="InterPro" id="IPR036771">
    <property type="entry name" value="ATPsynth_dsu/esu_N"/>
</dbReference>
<dbReference type="NCBIfam" id="TIGR01216">
    <property type="entry name" value="ATP_synt_epsi"/>
    <property type="match status" value="1"/>
</dbReference>
<dbReference type="NCBIfam" id="NF001847">
    <property type="entry name" value="PRK00571.1-4"/>
    <property type="match status" value="1"/>
</dbReference>
<dbReference type="PANTHER" id="PTHR13822">
    <property type="entry name" value="ATP SYNTHASE DELTA/EPSILON CHAIN"/>
    <property type="match status" value="1"/>
</dbReference>
<dbReference type="PANTHER" id="PTHR13822:SF10">
    <property type="entry name" value="ATP SYNTHASE EPSILON CHAIN, CHLOROPLASTIC"/>
    <property type="match status" value="1"/>
</dbReference>
<dbReference type="Pfam" id="PF02823">
    <property type="entry name" value="ATP-synt_DE_N"/>
    <property type="match status" value="1"/>
</dbReference>
<dbReference type="SUPFAM" id="SSF46604">
    <property type="entry name" value="Epsilon subunit of F1F0-ATP synthase C-terminal domain"/>
    <property type="match status" value="1"/>
</dbReference>
<dbReference type="SUPFAM" id="SSF51344">
    <property type="entry name" value="Epsilon subunit of F1F0-ATP synthase N-terminal domain"/>
    <property type="match status" value="1"/>
</dbReference>
<name>ATPE_ACTP7</name>
<gene>
    <name evidence="1" type="primary">atpC</name>
    <name type="ordered locus">APP7_1707</name>
</gene>
<comment type="function">
    <text evidence="1">Produces ATP from ADP in the presence of a proton gradient across the membrane.</text>
</comment>
<comment type="subunit">
    <text evidence="1">F-type ATPases have 2 components, CF(1) - the catalytic core - and CF(0) - the membrane proton channel. CF(1) has five subunits: alpha(3), beta(3), gamma(1), delta(1), epsilon(1). CF(0) has three main subunits: a, b and c.</text>
</comment>
<comment type="subcellular location">
    <subcellularLocation>
        <location evidence="1">Cell inner membrane</location>
        <topology evidence="1">Peripheral membrane protein</topology>
    </subcellularLocation>
</comment>
<comment type="similarity">
    <text evidence="1">Belongs to the ATPase epsilon chain family.</text>
</comment>